<organism>
    <name type="scientific">Escherichia coli O6:H1 (strain CFT073 / ATCC 700928 / UPEC)</name>
    <dbReference type="NCBI Taxonomy" id="199310"/>
    <lineage>
        <taxon>Bacteria</taxon>
        <taxon>Pseudomonadati</taxon>
        <taxon>Pseudomonadota</taxon>
        <taxon>Gammaproteobacteria</taxon>
        <taxon>Enterobacterales</taxon>
        <taxon>Enterobacteriaceae</taxon>
        <taxon>Escherichia</taxon>
    </lineage>
</organism>
<gene>
    <name evidence="1" type="primary">cdh</name>
    <name type="ordered locus">c4870</name>
</gene>
<feature type="chain" id="PRO_0000198574" description="CDP-diacylglycerol pyrophosphatase">
    <location>
        <begin position="1"/>
        <end position="251"/>
    </location>
</feature>
<feature type="transmembrane region" description="Helical" evidence="1">
    <location>
        <begin position="4"/>
        <end position="24"/>
    </location>
</feature>
<name>CDH_ECOL6</name>
<reference key="1">
    <citation type="journal article" date="2002" name="Proc. Natl. Acad. Sci. U.S.A.">
        <title>Extensive mosaic structure revealed by the complete genome sequence of uropathogenic Escherichia coli.</title>
        <authorList>
            <person name="Welch R.A."/>
            <person name="Burland V."/>
            <person name="Plunkett G. III"/>
            <person name="Redford P."/>
            <person name="Roesch P."/>
            <person name="Rasko D."/>
            <person name="Buckles E.L."/>
            <person name="Liou S.-R."/>
            <person name="Boutin A."/>
            <person name="Hackett J."/>
            <person name="Stroud D."/>
            <person name="Mayhew G.F."/>
            <person name="Rose D.J."/>
            <person name="Zhou S."/>
            <person name="Schwartz D.C."/>
            <person name="Perna N.T."/>
            <person name="Mobley H.L.T."/>
            <person name="Donnenberg M.S."/>
            <person name="Blattner F.R."/>
        </authorList>
    </citation>
    <scope>NUCLEOTIDE SEQUENCE [LARGE SCALE GENOMIC DNA]</scope>
    <source>
        <strain>CFT073 / ATCC 700928 / UPEC</strain>
    </source>
</reference>
<comment type="catalytic activity">
    <reaction evidence="1">
        <text>a CDP-1,2-diacyl-sn-glycerol + H2O = a 1,2-diacyl-sn-glycero-3-phosphate + CMP + 2 H(+)</text>
        <dbReference type="Rhea" id="RHEA:15221"/>
        <dbReference type="ChEBI" id="CHEBI:15377"/>
        <dbReference type="ChEBI" id="CHEBI:15378"/>
        <dbReference type="ChEBI" id="CHEBI:58332"/>
        <dbReference type="ChEBI" id="CHEBI:58608"/>
        <dbReference type="ChEBI" id="CHEBI:60377"/>
        <dbReference type="EC" id="3.6.1.26"/>
    </reaction>
</comment>
<comment type="pathway">
    <text evidence="1">Phospholipid metabolism; CDP-diacylglycerol degradation; phosphatidate from CDP-diacylglycerol: step 1/1.</text>
</comment>
<comment type="subcellular location">
    <subcellularLocation>
        <location evidence="1">Cell inner membrane</location>
        <topology evidence="1">Single-pass membrane protein</topology>
    </subcellularLocation>
</comment>
<comment type="similarity">
    <text evidence="1">Belongs to the Cdh family.</text>
</comment>
<comment type="sequence caution" evidence="2">
    <conflict type="erroneous initiation">
        <sequence resource="EMBL-CDS" id="AAN83298"/>
    </conflict>
</comment>
<evidence type="ECO:0000255" key="1">
    <source>
        <dbReference type="HAMAP-Rule" id="MF_00319"/>
    </source>
</evidence>
<evidence type="ECO:0000305" key="2"/>
<accession>Q8FBC8</accession>
<keyword id="KW-0997">Cell inner membrane</keyword>
<keyword id="KW-1003">Cell membrane</keyword>
<keyword id="KW-0378">Hydrolase</keyword>
<keyword id="KW-0444">Lipid biosynthesis</keyword>
<keyword id="KW-0443">Lipid metabolism</keyword>
<keyword id="KW-0472">Membrane</keyword>
<keyword id="KW-0594">Phospholipid biosynthesis</keyword>
<keyword id="KW-1208">Phospholipid metabolism</keyword>
<keyword id="KW-1185">Reference proteome</keyword>
<keyword id="KW-0812">Transmembrane</keyword>
<keyword id="KW-1133">Transmembrane helix</keyword>
<proteinExistence type="inferred from homology"/>
<dbReference type="EC" id="3.6.1.26" evidence="1"/>
<dbReference type="EMBL" id="AE014075">
    <property type="protein sequence ID" value="AAN83298.1"/>
    <property type="status" value="ALT_INIT"/>
    <property type="molecule type" value="Genomic_DNA"/>
</dbReference>
<dbReference type="RefSeq" id="WP_001298413.1">
    <property type="nucleotide sequence ID" value="NZ_CP051263.1"/>
</dbReference>
<dbReference type="SMR" id="Q8FBC8"/>
<dbReference type="STRING" id="199310.c4870"/>
<dbReference type="KEGG" id="ecc:c4870"/>
<dbReference type="eggNOG" id="COG2134">
    <property type="taxonomic scope" value="Bacteria"/>
</dbReference>
<dbReference type="HOGENOM" id="CLU_077117_0_1_6"/>
<dbReference type="UniPathway" id="UPA00609">
    <property type="reaction ID" value="UER00664"/>
</dbReference>
<dbReference type="Proteomes" id="UP000001410">
    <property type="component" value="Chromosome"/>
</dbReference>
<dbReference type="GO" id="GO:0005886">
    <property type="term" value="C:plasma membrane"/>
    <property type="evidence" value="ECO:0007669"/>
    <property type="project" value="UniProtKB-SubCell"/>
</dbReference>
<dbReference type="GO" id="GO:0008715">
    <property type="term" value="F:CDP-diacylglycerol diphosphatase activity"/>
    <property type="evidence" value="ECO:0007669"/>
    <property type="project" value="UniProtKB-UniRule"/>
</dbReference>
<dbReference type="GO" id="GO:0046342">
    <property type="term" value="P:CDP-diacylglycerol catabolic process"/>
    <property type="evidence" value="ECO:0007669"/>
    <property type="project" value="UniProtKB-UniRule"/>
</dbReference>
<dbReference type="GO" id="GO:0008654">
    <property type="term" value="P:phospholipid biosynthetic process"/>
    <property type="evidence" value="ECO:0007669"/>
    <property type="project" value="UniProtKB-KW"/>
</dbReference>
<dbReference type="FunFam" id="3.30.428.30:FF:000001">
    <property type="entry name" value="CDP-diacylglycerol pyrophosphatase"/>
    <property type="match status" value="1"/>
</dbReference>
<dbReference type="Gene3D" id="3.30.428.30">
    <property type="entry name" value="HIT family - CDH-like"/>
    <property type="match status" value="1"/>
</dbReference>
<dbReference type="HAMAP" id="MF_00319">
    <property type="entry name" value="Cdh"/>
    <property type="match status" value="1"/>
</dbReference>
<dbReference type="InterPro" id="IPR003763">
    <property type="entry name" value="CDP-diacylglyc_Pase"/>
</dbReference>
<dbReference type="InterPro" id="IPR015993">
    <property type="entry name" value="CDP-diacylglyc_Pase_proteobac"/>
</dbReference>
<dbReference type="InterPro" id="IPR036265">
    <property type="entry name" value="HIT-like_sf"/>
</dbReference>
<dbReference type="NCBIfam" id="TIGR00672">
    <property type="entry name" value="cdh"/>
    <property type="match status" value="1"/>
</dbReference>
<dbReference type="NCBIfam" id="NF003986">
    <property type="entry name" value="PRK05471.1-5"/>
    <property type="match status" value="1"/>
</dbReference>
<dbReference type="NCBIfam" id="NF003987">
    <property type="entry name" value="PRK05471.1-6"/>
    <property type="match status" value="1"/>
</dbReference>
<dbReference type="Pfam" id="PF02611">
    <property type="entry name" value="CDH"/>
    <property type="match status" value="1"/>
</dbReference>
<dbReference type="PIRSF" id="PIRSF001273">
    <property type="entry name" value="CDH"/>
    <property type="match status" value="1"/>
</dbReference>
<dbReference type="SUPFAM" id="SSF54197">
    <property type="entry name" value="HIT-like"/>
    <property type="match status" value="1"/>
</dbReference>
<sequence length="251" mass="28449">MKKAGLLFLVMIVIAVVAAGIGYWKLTGEESDTLRKIVLEQCLPNQQENQNPSPCAEVKPNAGYVVLKDRHGPLQYLLMPTYRINGTESPLLTDPSTPNFFWLAWQARDFMSQKYGQPVPDRAVSLAINSRTGRTQNHFHIHISCIRPDVREQLDNNLANISSRWLPLPGGLRGHEYLARRVTESELVQRSPFMMLAEEVPEAREHMGSYGLAMVRQSDNSFVLLATQRNLLTLNRASAEEIQDHQCEILR</sequence>
<protein>
    <recommendedName>
        <fullName evidence="1">CDP-diacylglycerol pyrophosphatase</fullName>
        <ecNumber evidence="1">3.6.1.26</ecNumber>
    </recommendedName>
    <alternativeName>
        <fullName evidence="1">CDP-diacylglycerol phosphatidylhydrolase</fullName>
    </alternativeName>
    <alternativeName>
        <fullName evidence="1">CDP-diglyceride hydrolase</fullName>
    </alternativeName>
</protein>